<name>ATPL_GLUOX</name>
<protein>
    <recommendedName>
        <fullName evidence="1">ATP synthase subunit c</fullName>
    </recommendedName>
    <alternativeName>
        <fullName evidence="1">ATP synthase F(0) sector subunit c</fullName>
    </alternativeName>
    <alternativeName>
        <fullName evidence="1">F-type ATPase subunit c</fullName>
        <shortName evidence="1">F-ATPase subunit c</shortName>
    </alternativeName>
    <alternativeName>
        <fullName evidence="1">Lipid-binding protein</fullName>
    </alternativeName>
</protein>
<feature type="chain" id="PRO_0000365889" description="ATP synthase subunit c">
    <location>
        <begin position="1"/>
        <end position="85"/>
    </location>
</feature>
<feature type="transmembrane region" description="Helical" evidence="1">
    <location>
        <begin position="20"/>
        <end position="40"/>
    </location>
</feature>
<feature type="transmembrane region" description="Helical" evidence="1">
    <location>
        <begin position="65"/>
        <end position="85"/>
    </location>
</feature>
<feature type="site" description="Reversibly protonated during proton transport" evidence="1">
    <location>
        <position position="69"/>
    </location>
</feature>
<reference key="1">
    <citation type="journal article" date="2005" name="Nat. Biotechnol.">
        <title>Complete genome sequence of the acetic acid bacterium Gluconobacter oxydans.</title>
        <authorList>
            <person name="Prust C."/>
            <person name="Hoffmeister M."/>
            <person name="Liesegang H."/>
            <person name="Wiezer A."/>
            <person name="Fricke W.F."/>
            <person name="Ehrenreich A."/>
            <person name="Gottschalk G."/>
            <person name="Deppenmeier U."/>
        </authorList>
    </citation>
    <scope>NUCLEOTIDE SEQUENCE [LARGE SCALE GENOMIC DNA]</scope>
    <source>
        <strain>621H</strain>
    </source>
</reference>
<gene>
    <name evidence="1" type="primary">atpE</name>
    <name type="ordered locus">GOX1112</name>
</gene>
<organism>
    <name type="scientific">Gluconobacter oxydans (strain 621H)</name>
    <name type="common">Gluconobacter suboxydans</name>
    <dbReference type="NCBI Taxonomy" id="290633"/>
    <lineage>
        <taxon>Bacteria</taxon>
        <taxon>Pseudomonadati</taxon>
        <taxon>Pseudomonadota</taxon>
        <taxon>Alphaproteobacteria</taxon>
        <taxon>Acetobacterales</taxon>
        <taxon>Acetobacteraceae</taxon>
        <taxon>Gluconobacter</taxon>
    </lineage>
</organism>
<evidence type="ECO:0000255" key="1">
    <source>
        <dbReference type="HAMAP-Rule" id="MF_01396"/>
    </source>
</evidence>
<keyword id="KW-0066">ATP synthesis</keyword>
<keyword id="KW-0997">Cell inner membrane</keyword>
<keyword id="KW-1003">Cell membrane</keyword>
<keyword id="KW-0138">CF(0)</keyword>
<keyword id="KW-0375">Hydrogen ion transport</keyword>
<keyword id="KW-0406">Ion transport</keyword>
<keyword id="KW-0446">Lipid-binding</keyword>
<keyword id="KW-0472">Membrane</keyword>
<keyword id="KW-1185">Reference proteome</keyword>
<keyword id="KW-0812">Transmembrane</keyword>
<keyword id="KW-1133">Transmembrane helix</keyword>
<keyword id="KW-0813">Transport</keyword>
<comment type="function">
    <text evidence="1">F(1)F(0) ATP synthase produces ATP from ADP in the presence of a proton or sodium gradient. F-type ATPases consist of two structural domains, F(1) containing the extramembraneous catalytic core and F(0) containing the membrane proton channel, linked together by a central stalk and a peripheral stalk. During catalysis, ATP synthesis in the catalytic domain of F(1) is coupled via a rotary mechanism of the central stalk subunits to proton translocation.</text>
</comment>
<comment type="function">
    <text evidence="1">Key component of the F(0) channel; it plays a direct role in translocation across the membrane. A homomeric c-ring of between 10-14 subunits forms the central stalk rotor element with the F(1) delta and epsilon subunits.</text>
</comment>
<comment type="subunit">
    <text evidence="1">F-type ATPases have 2 components, F(1) - the catalytic core - and F(0) - the membrane proton channel. F(1) has five subunits: alpha(3), beta(3), gamma(1), delta(1), epsilon(1). F(0) has three main subunits: a(1), b(2) and c(10-14). The alpha and beta chains form an alternating ring which encloses part of the gamma chain. F(1) is attached to F(0) by a central stalk formed by the gamma and epsilon chains, while a peripheral stalk is formed by the delta and b chains.</text>
</comment>
<comment type="subcellular location">
    <subcellularLocation>
        <location evidence="1">Cell inner membrane</location>
        <topology evidence="1">Multi-pass membrane protein</topology>
    </subcellularLocation>
</comment>
<comment type="similarity">
    <text evidence="1">Belongs to the ATPase C chain family.</text>
</comment>
<accession>Q5FRW6</accession>
<proteinExistence type="inferred from homology"/>
<dbReference type="EMBL" id="CP000009">
    <property type="protein sequence ID" value="AAW60880.1"/>
    <property type="molecule type" value="Genomic_DNA"/>
</dbReference>
<dbReference type="SMR" id="Q5FRW6"/>
<dbReference type="STRING" id="290633.GOX1112"/>
<dbReference type="KEGG" id="gox:GOX1112"/>
<dbReference type="eggNOG" id="COG0636">
    <property type="taxonomic scope" value="Bacteria"/>
</dbReference>
<dbReference type="HOGENOM" id="CLU_148047_4_1_5"/>
<dbReference type="Proteomes" id="UP000006375">
    <property type="component" value="Chromosome"/>
</dbReference>
<dbReference type="GO" id="GO:0005886">
    <property type="term" value="C:plasma membrane"/>
    <property type="evidence" value="ECO:0007669"/>
    <property type="project" value="UniProtKB-SubCell"/>
</dbReference>
<dbReference type="GO" id="GO:0045259">
    <property type="term" value="C:proton-transporting ATP synthase complex"/>
    <property type="evidence" value="ECO:0007669"/>
    <property type="project" value="UniProtKB-KW"/>
</dbReference>
<dbReference type="GO" id="GO:0033177">
    <property type="term" value="C:proton-transporting two-sector ATPase complex, proton-transporting domain"/>
    <property type="evidence" value="ECO:0007669"/>
    <property type="project" value="InterPro"/>
</dbReference>
<dbReference type="GO" id="GO:0008289">
    <property type="term" value="F:lipid binding"/>
    <property type="evidence" value="ECO:0007669"/>
    <property type="project" value="UniProtKB-KW"/>
</dbReference>
<dbReference type="GO" id="GO:0046933">
    <property type="term" value="F:proton-transporting ATP synthase activity, rotational mechanism"/>
    <property type="evidence" value="ECO:0007669"/>
    <property type="project" value="UniProtKB-UniRule"/>
</dbReference>
<dbReference type="CDD" id="cd18182">
    <property type="entry name" value="ATP-synt_Fo_c_ATP5G3"/>
    <property type="match status" value="1"/>
</dbReference>
<dbReference type="FunFam" id="1.20.20.10:FF:000008">
    <property type="entry name" value="ATPase subunit 9 homolog"/>
    <property type="match status" value="1"/>
</dbReference>
<dbReference type="Gene3D" id="1.20.20.10">
    <property type="entry name" value="F1F0 ATP synthase subunit C"/>
    <property type="match status" value="1"/>
</dbReference>
<dbReference type="HAMAP" id="MF_01396">
    <property type="entry name" value="ATP_synth_c_bact"/>
    <property type="match status" value="1"/>
</dbReference>
<dbReference type="InterPro" id="IPR000454">
    <property type="entry name" value="ATP_synth_F0_csu"/>
</dbReference>
<dbReference type="InterPro" id="IPR020537">
    <property type="entry name" value="ATP_synth_F0_csu_DDCD_BS"/>
</dbReference>
<dbReference type="InterPro" id="IPR038662">
    <property type="entry name" value="ATP_synth_F0_csu_sf"/>
</dbReference>
<dbReference type="InterPro" id="IPR002379">
    <property type="entry name" value="ATPase_proteolipid_c-like_dom"/>
</dbReference>
<dbReference type="InterPro" id="IPR035921">
    <property type="entry name" value="F/V-ATP_Csub_sf"/>
</dbReference>
<dbReference type="PANTHER" id="PTHR10031">
    <property type="entry name" value="ATP SYNTHASE LIPID-BINDING PROTEIN, MITOCHONDRIAL"/>
    <property type="match status" value="1"/>
</dbReference>
<dbReference type="PANTHER" id="PTHR10031:SF0">
    <property type="entry name" value="ATPASE PROTEIN 9"/>
    <property type="match status" value="1"/>
</dbReference>
<dbReference type="Pfam" id="PF00137">
    <property type="entry name" value="ATP-synt_C"/>
    <property type="match status" value="1"/>
</dbReference>
<dbReference type="PRINTS" id="PR00124">
    <property type="entry name" value="ATPASEC"/>
</dbReference>
<dbReference type="SUPFAM" id="SSF81333">
    <property type="entry name" value="F1F0 ATP synthase subunit C"/>
    <property type="match status" value="1"/>
</dbReference>
<dbReference type="PROSITE" id="PS00605">
    <property type="entry name" value="ATPASE_C"/>
    <property type="match status" value="1"/>
</dbReference>
<sequence>MDVQAAHEFGISIAQAARDLGAGIAVFALAGVGMGLGNIFSTLISSVARNPASRPHVFGIGMLGFALTEAVALFALLIAFLILFA</sequence>